<evidence type="ECO:0000255" key="1"/>
<accession>P75226</accession>
<gene>
    <name type="ordered locus">MPN_552</name>
    <name type="ORF">G12_orf269</name>
    <name type="ORF">MP290</name>
</gene>
<keyword id="KW-0067">ATP-binding</keyword>
<keyword id="KW-0547">Nucleotide-binding</keyword>
<keyword id="KW-1185">Reference proteome</keyword>
<protein>
    <recommendedName>
        <fullName>Uncharacterized protein MG374 homolog</fullName>
    </recommendedName>
</protein>
<proteinExistence type="predicted"/>
<reference key="1">
    <citation type="journal article" date="1996" name="Nucleic Acids Res.">
        <title>Complete sequence analysis of the genome of the bacterium Mycoplasma pneumoniae.</title>
        <authorList>
            <person name="Himmelreich R."/>
            <person name="Hilbert H."/>
            <person name="Plagens H."/>
            <person name="Pirkl E."/>
            <person name="Li B.-C."/>
            <person name="Herrmann R."/>
        </authorList>
    </citation>
    <scope>NUCLEOTIDE SEQUENCE [LARGE SCALE GENOMIC DNA]</scope>
    <source>
        <strain>ATCC 29342 / M129 / Subtype 1</strain>
    </source>
</reference>
<feature type="chain" id="PRO_0000210577" description="Uncharacterized protein MG374 homolog">
    <location>
        <begin position="1"/>
        <end position="269"/>
    </location>
</feature>
<feature type="binding site" evidence="1">
    <location>
        <begin position="103"/>
        <end position="110"/>
    </location>
    <ligand>
        <name>ATP</name>
        <dbReference type="ChEBI" id="CHEBI:30616"/>
    </ligand>
</feature>
<organism>
    <name type="scientific">Mycoplasma pneumoniae (strain ATCC 29342 / M129 / Subtype 1)</name>
    <name type="common">Mycoplasmoides pneumoniae</name>
    <dbReference type="NCBI Taxonomy" id="272634"/>
    <lineage>
        <taxon>Bacteria</taxon>
        <taxon>Bacillati</taxon>
        <taxon>Mycoplasmatota</taxon>
        <taxon>Mycoplasmoidales</taxon>
        <taxon>Mycoplasmoidaceae</taxon>
        <taxon>Mycoplasmoides</taxon>
    </lineage>
</organism>
<sequence length="269" mass="30913">MDRKIVALDINPANFFDAANDLAIWKDFFNKAQEKHQLVFISSCWQQTIVYLLDLLSLNNVDVIAESGAITWFCKTNQYDYQAFLDLASINVIIHHAVITNSGIFTMGKSRVDDTANLSANYFISLQKYKDFKSLWLTDFEQTLKYENFLKQLGKLELSSIYVFSPQYHMDLAFIDQIASGQPRFTHSNFYPNNLLFTSNKVTKFNALEKYTKTQGLMLKDVHYINLDETLVQNSEQLASAVFIKKQNNEGLTVQDIPDVLQKLCAQLL</sequence>
<dbReference type="EMBL" id="U00089">
    <property type="protein sequence ID" value="AAB95938.1"/>
    <property type="molecule type" value="Genomic_DNA"/>
</dbReference>
<dbReference type="PIR" id="S73616">
    <property type="entry name" value="S73616"/>
</dbReference>
<dbReference type="RefSeq" id="NP_110241.1">
    <property type="nucleotide sequence ID" value="NC_000912.1"/>
</dbReference>
<dbReference type="RefSeq" id="WP_010874909.1">
    <property type="nucleotide sequence ID" value="NZ_OU342337.1"/>
</dbReference>
<dbReference type="STRING" id="272634.MPN_552"/>
<dbReference type="EnsemblBacteria" id="AAB95938">
    <property type="protein sequence ID" value="AAB95938"/>
    <property type="gene ID" value="MPN_552"/>
</dbReference>
<dbReference type="KEGG" id="mpn:MPN_552"/>
<dbReference type="PATRIC" id="fig|272634.6.peg.614"/>
<dbReference type="HOGENOM" id="CLU_1014967_0_0_14"/>
<dbReference type="OrthoDB" id="397777at2"/>
<dbReference type="BioCyc" id="MPNE272634:G1GJ3-908-MONOMER"/>
<dbReference type="Proteomes" id="UP000000808">
    <property type="component" value="Chromosome"/>
</dbReference>
<dbReference type="GO" id="GO:0005524">
    <property type="term" value="F:ATP binding"/>
    <property type="evidence" value="ECO:0007669"/>
    <property type="project" value="UniProtKB-KW"/>
</dbReference>
<dbReference type="InterPro" id="IPR036412">
    <property type="entry name" value="HAD-like_sf"/>
</dbReference>
<dbReference type="NCBIfam" id="NF045755">
    <property type="entry name" value="MPN552"/>
    <property type="match status" value="1"/>
</dbReference>
<dbReference type="SUPFAM" id="SSF56784">
    <property type="entry name" value="HAD-like"/>
    <property type="match status" value="1"/>
</dbReference>
<name>Y552_MYCPN</name>